<feature type="chain" id="PRO_0000407555" description="Probable glucuronosyltransferase Os03g0287800">
    <location>
        <begin position="1"/>
        <end position="415"/>
    </location>
</feature>
<feature type="topological domain" description="Cytoplasmic" evidence="2">
    <location>
        <begin position="1"/>
        <end position="25"/>
    </location>
</feature>
<feature type="transmembrane region" description="Helical; Signal-anchor for type II membrane protein" evidence="2">
    <location>
        <begin position="26"/>
        <end position="43"/>
    </location>
</feature>
<feature type="topological domain" description="Lumenal" evidence="2">
    <location>
        <begin position="44"/>
        <end position="415"/>
    </location>
</feature>
<feature type="glycosylation site" description="N-linked (GlcNAc...) asparagine" evidence="2">
    <location>
        <position position="78"/>
    </location>
</feature>
<feature type="glycosylation site" description="N-linked (GlcNAc...) asparagine" evidence="2">
    <location>
        <position position="165"/>
    </location>
</feature>
<feature type="glycosylation site" description="N-linked (GlcNAc...) asparagine" evidence="2">
    <location>
        <position position="257"/>
    </location>
</feature>
<feature type="glycosylation site" description="N-linked (GlcNAc...) asparagine" evidence="2">
    <location>
        <position position="287"/>
    </location>
</feature>
<reference key="1">
    <citation type="journal article" date="2005" name="Genome Res.">
        <title>Sequence, annotation, and analysis of synteny between rice chromosome 3 and diverged grass species.</title>
        <authorList>
            <consortium name="The rice chromosome 3 sequencing consortium"/>
            <person name="Buell C.R."/>
            <person name="Yuan Q."/>
            <person name="Ouyang S."/>
            <person name="Liu J."/>
            <person name="Zhu W."/>
            <person name="Wang A."/>
            <person name="Maiti R."/>
            <person name="Haas B."/>
            <person name="Wortman J."/>
            <person name="Pertea M."/>
            <person name="Jones K.M."/>
            <person name="Kim M."/>
            <person name="Overton L."/>
            <person name="Tsitrin T."/>
            <person name="Fadrosh D."/>
            <person name="Bera J."/>
            <person name="Weaver B."/>
            <person name="Jin S."/>
            <person name="Johri S."/>
            <person name="Reardon M."/>
            <person name="Webb K."/>
            <person name="Hill J."/>
            <person name="Moffat K."/>
            <person name="Tallon L."/>
            <person name="Van Aken S."/>
            <person name="Lewis M."/>
            <person name="Utterback T."/>
            <person name="Feldblyum T."/>
            <person name="Zismann V."/>
            <person name="Iobst S."/>
            <person name="Hsiao J."/>
            <person name="de Vazeille A.R."/>
            <person name="Salzberg S.L."/>
            <person name="White O."/>
            <person name="Fraser C.M."/>
            <person name="Yu Y."/>
            <person name="Kim H."/>
            <person name="Rambo T."/>
            <person name="Currie J."/>
            <person name="Collura K."/>
            <person name="Kernodle-Thompson S."/>
            <person name="Wei F."/>
            <person name="Kudrna K."/>
            <person name="Ammiraju J.S.S."/>
            <person name="Luo M."/>
            <person name="Goicoechea J.L."/>
            <person name="Wing R.A."/>
            <person name="Henry D."/>
            <person name="Oates R."/>
            <person name="Palmer M."/>
            <person name="Pries G."/>
            <person name="Saski C."/>
            <person name="Simmons J."/>
            <person name="Soderlund C."/>
            <person name="Nelson W."/>
            <person name="de la Bastide M."/>
            <person name="Spiegel L."/>
            <person name="Nascimento L."/>
            <person name="Huang E."/>
            <person name="Preston R."/>
            <person name="Zutavern T."/>
            <person name="Palmer L."/>
            <person name="O'Shaughnessy A."/>
            <person name="Dike S."/>
            <person name="McCombie W.R."/>
            <person name="Minx P."/>
            <person name="Cordum H."/>
            <person name="Wilson R."/>
            <person name="Jin W."/>
            <person name="Lee H.R."/>
            <person name="Jiang J."/>
            <person name="Jackson S."/>
        </authorList>
    </citation>
    <scope>NUCLEOTIDE SEQUENCE [LARGE SCALE GENOMIC DNA]</scope>
    <source>
        <strain>cv. Nipponbare</strain>
    </source>
</reference>
<reference key="2">
    <citation type="journal article" date="2005" name="Nature">
        <title>The map-based sequence of the rice genome.</title>
        <authorList>
            <consortium name="International rice genome sequencing project (IRGSP)"/>
        </authorList>
    </citation>
    <scope>NUCLEOTIDE SEQUENCE [LARGE SCALE GENOMIC DNA]</scope>
    <source>
        <strain>cv. Nipponbare</strain>
    </source>
</reference>
<reference key="3">
    <citation type="journal article" date="2008" name="Nucleic Acids Res.">
        <title>The rice annotation project database (RAP-DB): 2008 update.</title>
        <authorList>
            <consortium name="The rice annotation project (RAP)"/>
        </authorList>
    </citation>
    <scope>GENOME REANNOTATION</scope>
    <source>
        <strain>cv. Nipponbare</strain>
    </source>
</reference>
<reference key="4">
    <citation type="journal article" date="2013" name="Rice">
        <title>Improvement of the Oryza sativa Nipponbare reference genome using next generation sequence and optical map data.</title>
        <authorList>
            <person name="Kawahara Y."/>
            <person name="de la Bastide M."/>
            <person name="Hamilton J.P."/>
            <person name="Kanamori H."/>
            <person name="McCombie W.R."/>
            <person name="Ouyang S."/>
            <person name="Schwartz D.C."/>
            <person name="Tanaka T."/>
            <person name="Wu J."/>
            <person name="Zhou S."/>
            <person name="Childs K.L."/>
            <person name="Davidson R.M."/>
            <person name="Lin H."/>
            <person name="Quesada-Ocampo L."/>
            <person name="Vaillancourt B."/>
            <person name="Sakai H."/>
            <person name="Lee S.S."/>
            <person name="Kim J."/>
            <person name="Numa H."/>
            <person name="Itoh T."/>
            <person name="Buell C.R."/>
            <person name="Matsumoto T."/>
        </authorList>
    </citation>
    <scope>GENOME REANNOTATION</scope>
    <source>
        <strain>cv. Nipponbare</strain>
    </source>
</reference>
<comment type="function">
    <text evidence="1">Involved in the synthesis of glucuronoxylan hemicellulose in secondary cell walls.</text>
</comment>
<comment type="subcellular location">
    <subcellularLocation>
        <location evidence="1">Golgi apparatus membrane</location>
        <topology evidence="1">Single-pass type II membrane protein</topology>
    </subcellularLocation>
</comment>
<comment type="similarity">
    <text evidence="3">Belongs to the glycosyltransferase 43 family.</text>
</comment>
<comment type="sequence caution" evidence="3">
    <conflict type="erroneous gene model prediction">
        <sequence resource="EMBL-CDS" id="BAF11694"/>
    </conflict>
</comment>
<organism>
    <name type="scientific">Oryza sativa subsp. japonica</name>
    <name type="common">Rice</name>
    <dbReference type="NCBI Taxonomy" id="39947"/>
    <lineage>
        <taxon>Eukaryota</taxon>
        <taxon>Viridiplantae</taxon>
        <taxon>Streptophyta</taxon>
        <taxon>Embryophyta</taxon>
        <taxon>Tracheophyta</taxon>
        <taxon>Spermatophyta</taxon>
        <taxon>Magnoliopsida</taxon>
        <taxon>Liliopsida</taxon>
        <taxon>Poales</taxon>
        <taxon>Poaceae</taxon>
        <taxon>BOP clade</taxon>
        <taxon>Oryzoideae</taxon>
        <taxon>Oryzeae</taxon>
        <taxon>Oryzinae</taxon>
        <taxon>Oryza</taxon>
        <taxon>Oryza sativa</taxon>
    </lineage>
</organism>
<accession>Q10N05</accession>
<accession>Q0DSU4</accession>
<gene>
    <name type="ordered locus">Os03g0287800</name>
    <name type="ordered locus">LOC_Os03g17850</name>
</gene>
<sequence>MGSSTDHGGAGGRGKKGSGSQLWKKALLHSSLCFVMGFFTGFAPSSVSDWTSAAVSAGGVGSSHVVRSLHATGGAAVNRSLLAQAAAGAVDAGPQPLLVVVTTTESTPSAAGQRAAALTRMAHTLRLVPPPLLWVVVEANPDVAATARLLRTTGLMYRHLTYKDNFTVADAAAGKERHHQRNVALGHIEHHRLAGVVLFAGLGDTFDLRFFDQLRQIRTFGAWPVATMSQNERKVVVQGPACSSSSVAGWFSMDLSNATSPVAVGGAGYGAAAARPRELDVHGFAFNSSVLWDPERWGRYPTSEPDKSQDSVKFVQQVVLEDYSKVRGIPSDCSEVMAKLRTVSQQLEATWRSALAIINELLRACASVHGHVRSKLDSLYRSDFPQTEPETLICLIHDHASHYIYGGRFLSGDFC</sequence>
<keyword id="KW-0961">Cell wall biogenesis/degradation</keyword>
<keyword id="KW-0325">Glycoprotein</keyword>
<keyword id="KW-0328">Glycosyltransferase</keyword>
<keyword id="KW-0333">Golgi apparatus</keyword>
<keyword id="KW-0472">Membrane</keyword>
<keyword id="KW-1185">Reference proteome</keyword>
<keyword id="KW-0735">Signal-anchor</keyword>
<keyword id="KW-0808">Transferase</keyword>
<keyword id="KW-0812">Transmembrane</keyword>
<keyword id="KW-1133">Transmembrane helix</keyword>
<name>GT32_ORYSJ</name>
<protein>
    <recommendedName>
        <fullName>Probable glucuronosyltransferase Os03g0287800</fullName>
        <ecNumber>2.4.-.-</ecNumber>
    </recommendedName>
</protein>
<proteinExistence type="inferred from homology"/>
<dbReference type="EC" id="2.4.-.-"/>
<dbReference type="EMBL" id="DP000009">
    <property type="protein sequence ID" value="ABF95369.1"/>
    <property type="molecule type" value="Genomic_DNA"/>
</dbReference>
<dbReference type="EMBL" id="AP008209">
    <property type="protein sequence ID" value="BAF11694.2"/>
    <property type="status" value="ALT_SEQ"/>
    <property type="molecule type" value="Genomic_DNA"/>
</dbReference>
<dbReference type="EMBL" id="AP014959">
    <property type="status" value="NOT_ANNOTATED_CDS"/>
    <property type="molecule type" value="Genomic_DNA"/>
</dbReference>
<dbReference type="SMR" id="Q10N05"/>
<dbReference type="FunCoup" id="Q10N05">
    <property type="interactions" value="539"/>
</dbReference>
<dbReference type="STRING" id="39947.Q10N05"/>
<dbReference type="CAZy" id="GT43">
    <property type="family name" value="Glycosyltransferase Family 43"/>
</dbReference>
<dbReference type="PaxDb" id="39947-Q10N05"/>
<dbReference type="KEGG" id="dosa:Os03g0287800"/>
<dbReference type="eggNOG" id="KOG1476">
    <property type="taxonomic scope" value="Eukaryota"/>
</dbReference>
<dbReference type="InParanoid" id="Q10N05"/>
<dbReference type="Proteomes" id="UP000000763">
    <property type="component" value="Chromosome 3"/>
</dbReference>
<dbReference type="Proteomes" id="UP000059680">
    <property type="component" value="Chromosome 3"/>
</dbReference>
<dbReference type="GO" id="GO:0000139">
    <property type="term" value="C:Golgi membrane"/>
    <property type="evidence" value="ECO:0000318"/>
    <property type="project" value="GO_Central"/>
</dbReference>
<dbReference type="GO" id="GO:0015018">
    <property type="term" value="F:galactosylgalactosylxylosylprotein 3-beta-glucuronosyltransferase activity"/>
    <property type="evidence" value="ECO:0007669"/>
    <property type="project" value="InterPro"/>
</dbReference>
<dbReference type="GO" id="GO:0042285">
    <property type="term" value="F:xylosyltransferase activity"/>
    <property type="evidence" value="ECO:0000318"/>
    <property type="project" value="GO_Central"/>
</dbReference>
<dbReference type="GO" id="GO:0071555">
    <property type="term" value="P:cell wall organization"/>
    <property type="evidence" value="ECO:0007669"/>
    <property type="project" value="UniProtKB-KW"/>
</dbReference>
<dbReference type="GO" id="GO:0010417">
    <property type="term" value="P:glucuronoxylan biosynthetic process"/>
    <property type="evidence" value="ECO:0000318"/>
    <property type="project" value="GO_Central"/>
</dbReference>
<dbReference type="GO" id="GO:0009834">
    <property type="term" value="P:plant-type secondary cell wall biogenesis"/>
    <property type="evidence" value="ECO:0000318"/>
    <property type="project" value="GO_Central"/>
</dbReference>
<dbReference type="FunFam" id="3.90.550.10:FF:000084">
    <property type="entry name" value="Glycosyltransferases"/>
    <property type="match status" value="1"/>
</dbReference>
<dbReference type="Gene3D" id="3.90.550.10">
    <property type="entry name" value="Spore Coat Polysaccharide Biosynthesis Protein SpsA, Chain A"/>
    <property type="match status" value="1"/>
</dbReference>
<dbReference type="InterPro" id="IPR005027">
    <property type="entry name" value="Glyco_trans_43"/>
</dbReference>
<dbReference type="InterPro" id="IPR029044">
    <property type="entry name" value="Nucleotide-diphossugar_trans"/>
</dbReference>
<dbReference type="PANTHER" id="PTHR10896">
    <property type="entry name" value="GALACTOSYLGALACTOSYLXYLOSYLPROTEIN 3-BETA-GLUCURONOSYLTRANSFERASE BETA-1,3-GLUCURONYLTRANSFERASE"/>
    <property type="match status" value="1"/>
</dbReference>
<dbReference type="PANTHER" id="PTHR10896:SF25">
    <property type="entry name" value="GLUCURONOSYLTRANSFERASE OS03G0287800-RELATED"/>
    <property type="match status" value="1"/>
</dbReference>
<dbReference type="Pfam" id="PF03360">
    <property type="entry name" value="Glyco_transf_43"/>
    <property type="match status" value="1"/>
</dbReference>
<dbReference type="SUPFAM" id="SSF53448">
    <property type="entry name" value="Nucleotide-diphospho-sugar transferases"/>
    <property type="match status" value="1"/>
</dbReference>
<evidence type="ECO:0000250" key="1"/>
<evidence type="ECO:0000255" key="2"/>
<evidence type="ECO:0000305" key="3"/>